<dbReference type="EMBL" id="ACJE01000012">
    <property type="protein sequence ID" value="EHA22192.1"/>
    <property type="molecule type" value="Genomic_DNA"/>
</dbReference>
<dbReference type="STRING" id="380704.G3Y415"/>
<dbReference type="VEuPathDB" id="FungiDB:ASPNIDRAFT2_1090334"/>
<dbReference type="HOGENOM" id="CLU_018877_0_0_1"/>
<dbReference type="OrthoDB" id="47133at5052"/>
<dbReference type="Proteomes" id="UP000009038">
    <property type="component" value="Unassembled WGS sequence"/>
</dbReference>
<dbReference type="GO" id="GO:0005634">
    <property type="term" value="C:nucleus"/>
    <property type="evidence" value="ECO:0007669"/>
    <property type="project" value="UniProtKB-SubCell"/>
</dbReference>
<dbReference type="GO" id="GO:0003677">
    <property type="term" value="F:DNA binding"/>
    <property type="evidence" value="ECO:0007669"/>
    <property type="project" value="UniProtKB-KW"/>
</dbReference>
<dbReference type="GO" id="GO:0000981">
    <property type="term" value="F:DNA-binding transcription factor activity, RNA polymerase II-specific"/>
    <property type="evidence" value="ECO:0007669"/>
    <property type="project" value="InterPro"/>
</dbReference>
<dbReference type="GO" id="GO:0008270">
    <property type="term" value="F:zinc ion binding"/>
    <property type="evidence" value="ECO:0007669"/>
    <property type="project" value="InterPro"/>
</dbReference>
<dbReference type="GO" id="GO:0006351">
    <property type="term" value="P:DNA-templated transcription"/>
    <property type="evidence" value="ECO:0007669"/>
    <property type="project" value="InterPro"/>
</dbReference>
<dbReference type="GO" id="GO:0009893">
    <property type="term" value="P:positive regulation of metabolic process"/>
    <property type="evidence" value="ECO:0007669"/>
    <property type="project" value="UniProtKB-ARBA"/>
</dbReference>
<dbReference type="CDD" id="cd12148">
    <property type="entry name" value="fungal_TF_MHR"/>
    <property type="match status" value="1"/>
</dbReference>
<dbReference type="CDD" id="cd00067">
    <property type="entry name" value="GAL4"/>
    <property type="match status" value="1"/>
</dbReference>
<dbReference type="Gene3D" id="4.10.240.10">
    <property type="entry name" value="Zn(2)-C6 fungal-type DNA-binding domain"/>
    <property type="match status" value="1"/>
</dbReference>
<dbReference type="InterPro" id="IPR050613">
    <property type="entry name" value="Sec_Metabolite_Reg"/>
</dbReference>
<dbReference type="InterPro" id="IPR007219">
    <property type="entry name" value="Transcription_factor_dom_fun"/>
</dbReference>
<dbReference type="InterPro" id="IPR036864">
    <property type="entry name" value="Zn2-C6_fun-type_DNA-bd_sf"/>
</dbReference>
<dbReference type="InterPro" id="IPR001138">
    <property type="entry name" value="Zn2Cys6_DnaBD"/>
</dbReference>
<dbReference type="PANTHER" id="PTHR31001">
    <property type="entry name" value="UNCHARACTERIZED TRANSCRIPTIONAL REGULATORY PROTEIN"/>
    <property type="match status" value="1"/>
</dbReference>
<dbReference type="PANTHER" id="PTHR31001:SF40">
    <property type="entry name" value="ZN(II)2CYS6 TRANSCRIPTION FACTOR (EUROFUNG)"/>
    <property type="match status" value="1"/>
</dbReference>
<dbReference type="Pfam" id="PF04082">
    <property type="entry name" value="Fungal_trans"/>
    <property type="match status" value="1"/>
</dbReference>
<dbReference type="Pfam" id="PF00172">
    <property type="entry name" value="Zn_clus"/>
    <property type="match status" value="1"/>
</dbReference>
<dbReference type="SMART" id="SM00906">
    <property type="entry name" value="Fungal_trans"/>
    <property type="match status" value="1"/>
</dbReference>
<dbReference type="SMART" id="SM00066">
    <property type="entry name" value="GAL4"/>
    <property type="match status" value="1"/>
</dbReference>
<dbReference type="SUPFAM" id="SSF57701">
    <property type="entry name" value="Zn2/Cys6 DNA-binding domain"/>
    <property type="match status" value="1"/>
</dbReference>
<dbReference type="PROSITE" id="PS00463">
    <property type="entry name" value="ZN2_CY6_FUNGAL_1"/>
    <property type="match status" value="1"/>
</dbReference>
<dbReference type="PROSITE" id="PS50048">
    <property type="entry name" value="ZN2_CY6_FUNGAL_2"/>
    <property type="match status" value="1"/>
</dbReference>
<keyword id="KW-0238">DNA-binding</keyword>
<keyword id="KW-0479">Metal-binding</keyword>
<keyword id="KW-0539">Nucleus</keyword>
<keyword id="KW-0804">Transcription</keyword>
<keyword id="KW-0805">Transcription regulation</keyword>
<keyword id="KW-0862">Zinc</keyword>
<feature type="chain" id="PRO_0000436768" description="Transcription factor yanR">
    <location>
        <begin position="1"/>
        <end position="817"/>
    </location>
</feature>
<feature type="DNA-binding region" description="Zn(2)-C6 fungal-type" evidence="1">
    <location>
        <begin position="19"/>
        <end position="46"/>
    </location>
</feature>
<feature type="region of interest" description="Disordered" evidence="2">
    <location>
        <begin position="102"/>
        <end position="161"/>
    </location>
</feature>
<feature type="region of interest" description="Disordered" evidence="2">
    <location>
        <begin position="180"/>
        <end position="218"/>
    </location>
</feature>
<feature type="region of interest" description="Disordered" evidence="2">
    <location>
        <begin position="733"/>
        <end position="775"/>
    </location>
</feature>
<feature type="compositionally biased region" description="Pro residues" evidence="2">
    <location>
        <begin position="113"/>
        <end position="127"/>
    </location>
</feature>
<feature type="compositionally biased region" description="Polar residues" evidence="2">
    <location>
        <begin position="146"/>
        <end position="158"/>
    </location>
</feature>
<feature type="compositionally biased region" description="Low complexity" evidence="2">
    <location>
        <begin position="184"/>
        <end position="195"/>
    </location>
</feature>
<feature type="compositionally biased region" description="Polar residues" evidence="2">
    <location>
        <begin position="208"/>
        <end position="217"/>
    </location>
</feature>
<feature type="compositionally biased region" description="Polar residues" evidence="2">
    <location>
        <begin position="748"/>
        <end position="760"/>
    </location>
</feature>
<protein>
    <recommendedName>
        <fullName evidence="5">Transcription factor yanR</fullName>
    </recommendedName>
    <alternativeName>
        <fullName evidence="5">Yanuthone D biosynthesis cluster protein R</fullName>
    </alternativeName>
</protein>
<gene>
    <name evidence="5" type="primary">yanR</name>
    <name type="ORF">ASPNIDRAFT_44961</name>
</gene>
<sequence length="817" mass="90121">MPPPPEPRQIKRPRLSLSCIVCRRRKVRCGREHPECANCVRMKENCVYKTMVHDEFTGRVRQVSPPPVPQGDNPNGPEFCANNSEERTGGFTWSHWMSQGSGNVLDLSDEAPLPRPTISPASAPPPQKRSTQAKCDASSVPHPHHSSTILTPAPSSHPQVDLVYPTVPSWEEAIQLPDNHHASSRAGTSRTSSVSQDASPAVSESARAPSTSTSYSGLPSPDYLSVRRGARVRYIGQAFWGLVAGKETLSDDFFDCNRDASMEQSLTHISSLGMFNLLRSLPTKPVSDALLDAFFFAVWPLSPLVHGPTLRADYDNFWEWCRNSDRALPPEKVRDDPTFLCLLFAILYCGASAAPPTSWACTNLQSLRKETTIKHLKSAYTTSLSLCQHLEHPTLNTLVSTLLTAPFLDRDVAPMRNMVSVSTTVRIAQSMGLHREGTWSSSLSPVDREIRRRAWWYIIGLDVQSSISTGLPPCYATEALDIVSMIADTRDEDIGDLSNHRSPEPVPRPSEQSLAVILAIARSETARLQSKIVSRLQNGRRLAQTELTELVTSAKKLQQKLDTLIARVPSQGIPEKGFIPSRLAKASPLYQTPAFSPYVWFCYRHYGPLQCVFLILVYLHTFPESGDIVLARYCIDEIIDHTVSHYQVPQDSFGATRADNSESDEGATEDQIPLAIQVLVDLHNRLQSHPRSDNQTTDRLDGNEYQFSPYSLELGIQGTEEDTIDKSIFSLPSLSSSSSRTHIHRNQEAPSTTTAPQMPSGTKHGPPSSVFVADSDGGSDLDILASLSDFETWSSSLVVDPSDILAHPTSMAPHHPV</sequence>
<evidence type="ECO:0000255" key="1">
    <source>
        <dbReference type="PROSITE-ProRule" id="PRU00227"/>
    </source>
</evidence>
<evidence type="ECO:0000256" key="2">
    <source>
        <dbReference type="SAM" id="MobiDB-lite"/>
    </source>
</evidence>
<evidence type="ECO:0000269" key="3">
    <source>
    </source>
</evidence>
<evidence type="ECO:0000269" key="4">
    <source>
    </source>
</evidence>
<evidence type="ECO:0000303" key="5">
    <source>
    </source>
</evidence>
<accession>G3Y415</accession>
<name>YANR_ASPNA</name>
<proteinExistence type="evidence at protein level"/>
<reference key="1">
    <citation type="journal article" date="2011" name="Genome Res.">
        <title>Comparative genomics of citric-acid-producing Aspergillus niger ATCC 1015 versus enzyme-producing CBS 513.88.</title>
        <authorList>
            <person name="Andersen M.R."/>
            <person name="Salazar M.P."/>
            <person name="Schaap P.J."/>
            <person name="van de Vondervoort P.J.I."/>
            <person name="Culley D."/>
            <person name="Thykaer J."/>
            <person name="Frisvad J.C."/>
            <person name="Nielsen K.F."/>
            <person name="Albang R."/>
            <person name="Albermann K."/>
            <person name="Berka R.M."/>
            <person name="Braus G.H."/>
            <person name="Braus-Stromeyer S.A."/>
            <person name="Corrochano L.M."/>
            <person name="Dai Z."/>
            <person name="van Dijck P.W.M."/>
            <person name="Hofmann G."/>
            <person name="Lasure L.L."/>
            <person name="Magnuson J.K."/>
            <person name="Menke H."/>
            <person name="Meijer M."/>
            <person name="Meijer S.L."/>
            <person name="Nielsen J.B."/>
            <person name="Nielsen M.L."/>
            <person name="van Ooyen A.J.J."/>
            <person name="Pel H.J."/>
            <person name="Poulsen L."/>
            <person name="Samson R.A."/>
            <person name="Stam H."/>
            <person name="Tsang A."/>
            <person name="van den Brink J.M."/>
            <person name="Atkins A."/>
            <person name="Aerts A."/>
            <person name="Shapiro H."/>
            <person name="Pangilinan J."/>
            <person name="Salamov A."/>
            <person name="Lou Y."/>
            <person name="Lindquist E."/>
            <person name="Lucas S."/>
            <person name="Grimwood J."/>
            <person name="Grigoriev I.V."/>
            <person name="Kubicek C.P."/>
            <person name="Martinez D."/>
            <person name="van Peij N.N.M.E."/>
            <person name="Roubos J.A."/>
            <person name="Nielsen J."/>
            <person name="Baker S.E."/>
        </authorList>
    </citation>
    <scope>NUCLEOTIDE SEQUENCE [LARGE SCALE GENOMIC DNA]</scope>
    <source>
        <strain>ATCC 1015 / CBS 113.46 / FGSC A1144 / LSHB Ac4 / NCTC 3858a / NRRL 328 / USDA 3528.7</strain>
    </source>
</reference>
<reference key="2">
    <citation type="journal article" date="2000" name="J. Org. Chem.">
        <title>Yanuthones: novel metabolites from a marine isolate of Aspergillus niger.</title>
        <authorList>
            <person name="Bugni T.S."/>
            <person name="Abbanat D."/>
            <person name="Bernan V.S."/>
            <person name="Maiese W.M."/>
            <person name="Greenstein M."/>
            <person name="Van Wagoner R.M."/>
            <person name="Ireland C.M."/>
        </authorList>
    </citation>
    <scope>BIOTECHNOLOGY</scope>
</reference>
<reference key="3">
    <citation type="journal article" date="2014" name="Chem. Biol.">
        <title>Molecular and chemical characterization of the biosynthesis of the 6-MSA-derived meroterpenoid yanuthone D in Aspergillus niger.</title>
        <authorList>
            <person name="Holm D.K."/>
            <person name="Petersen L.M."/>
            <person name="Klitgaard A."/>
            <person name="Knudsen P.B."/>
            <person name="Jarczynska Z.D."/>
            <person name="Nielsen K.F."/>
            <person name="Gotfredsen C.H."/>
            <person name="Larsen T.O."/>
            <person name="Mortensen U.H."/>
        </authorList>
    </citation>
    <scope>FUNCTION</scope>
    <scope>DISRUPTION PHENOTYPE</scope>
</reference>
<comment type="function">
    <text evidence="4">Transcription factor that regulates the expression of the gene cluster that mediates the biosynthesis of yanuthone D, a fungal isoprenoid epoxycyclohexenone that acts as an antibiotic against fungi and bacteria (PubMed:24684908).</text>
</comment>
<comment type="subcellular location">
    <subcellularLocation>
        <location evidence="1">Nucleus</location>
    </subcellularLocation>
</comment>
<comment type="disruption phenotype">
    <text evidence="4">Leads to significant down-regulation of the yanuthone D gene clister and losses the ability to produce yanuthones D and E (PubMed:24684908).</text>
</comment>
<comment type="biotechnology">
    <text evidence="3">Yanuthone D is an antibiotic against Candida albicans, methicillin-resistant Staphylococcus aureus (MRSA), and vancomycin-resistant Enterococcus (PubMed:11031048).</text>
</comment>
<organism>
    <name type="scientific">Aspergillus niger (strain ATCC 1015 / CBS 113.46 / FGSC A1144 / LSHB Ac4 / NCTC 3858a / NRRL 328 / USDA 3528.7)</name>
    <dbReference type="NCBI Taxonomy" id="380704"/>
    <lineage>
        <taxon>Eukaryota</taxon>
        <taxon>Fungi</taxon>
        <taxon>Dikarya</taxon>
        <taxon>Ascomycota</taxon>
        <taxon>Pezizomycotina</taxon>
        <taxon>Eurotiomycetes</taxon>
        <taxon>Eurotiomycetidae</taxon>
        <taxon>Eurotiales</taxon>
        <taxon>Aspergillaceae</taxon>
        <taxon>Aspergillus</taxon>
        <taxon>Aspergillus subgen. Circumdati</taxon>
    </lineage>
</organism>